<feature type="chain" id="PRO_0000369249" description="Probable poly [ADP-ribose] polymerase DDB_G0278045">
    <location>
        <begin position="1"/>
        <end position="337"/>
    </location>
</feature>
<feature type="domain" description="PARP catalytic" evidence="1">
    <location>
        <begin position="21"/>
        <end position="231"/>
    </location>
</feature>
<feature type="region of interest" description="Disordered" evidence="2">
    <location>
        <begin position="218"/>
        <end position="247"/>
    </location>
</feature>
<feature type="compositionally biased region" description="Low complexity" evidence="2">
    <location>
        <begin position="218"/>
        <end position="242"/>
    </location>
</feature>
<reference key="1">
    <citation type="journal article" date="2005" name="Nature">
        <title>The genome of the social amoeba Dictyostelium discoideum.</title>
        <authorList>
            <person name="Eichinger L."/>
            <person name="Pachebat J.A."/>
            <person name="Gloeckner G."/>
            <person name="Rajandream M.A."/>
            <person name="Sucgang R."/>
            <person name="Berriman M."/>
            <person name="Song J."/>
            <person name="Olsen R."/>
            <person name="Szafranski K."/>
            <person name="Xu Q."/>
            <person name="Tunggal B."/>
            <person name="Kummerfeld S."/>
            <person name="Madera M."/>
            <person name="Konfortov B.A."/>
            <person name="Rivero F."/>
            <person name="Bankier A.T."/>
            <person name="Lehmann R."/>
            <person name="Hamlin N."/>
            <person name="Davies R."/>
            <person name="Gaudet P."/>
            <person name="Fey P."/>
            <person name="Pilcher K."/>
            <person name="Chen G."/>
            <person name="Saunders D."/>
            <person name="Sodergren E.J."/>
            <person name="Davis P."/>
            <person name="Kerhornou A."/>
            <person name="Nie X."/>
            <person name="Hall N."/>
            <person name="Anjard C."/>
            <person name="Hemphill L."/>
            <person name="Bason N."/>
            <person name="Farbrother P."/>
            <person name="Desany B."/>
            <person name="Just E."/>
            <person name="Morio T."/>
            <person name="Rost R."/>
            <person name="Churcher C.M."/>
            <person name="Cooper J."/>
            <person name="Haydock S."/>
            <person name="van Driessche N."/>
            <person name="Cronin A."/>
            <person name="Goodhead I."/>
            <person name="Muzny D.M."/>
            <person name="Mourier T."/>
            <person name="Pain A."/>
            <person name="Lu M."/>
            <person name="Harper D."/>
            <person name="Lindsay R."/>
            <person name="Hauser H."/>
            <person name="James K.D."/>
            <person name="Quiles M."/>
            <person name="Madan Babu M."/>
            <person name="Saito T."/>
            <person name="Buchrieser C."/>
            <person name="Wardroper A."/>
            <person name="Felder M."/>
            <person name="Thangavelu M."/>
            <person name="Johnson D."/>
            <person name="Knights A."/>
            <person name="Loulseged H."/>
            <person name="Mungall K.L."/>
            <person name="Oliver K."/>
            <person name="Price C."/>
            <person name="Quail M.A."/>
            <person name="Urushihara H."/>
            <person name="Hernandez J."/>
            <person name="Rabbinowitsch E."/>
            <person name="Steffen D."/>
            <person name="Sanders M."/>
            <person name="Ma J."/>
            <person name="Kohara Y."/>
            <person name="Sharp S."/>
            <person name="Simmonds M.N."/>
            <person name="Spiegler S."/>
            <person name="Tivey A."/>
            <person name="Sugano S."/>
            <person name="White B."/>
            <person name="Walker D."/>
            <person name="Woodward J.R."/>
            <person name="Winckler T."/>
            <person name="Tanaka Y."/>
            <person name="Shaulsky G."/>
            <person name="Schleicher M."/>
            <person name="Weinstock G.M."/>
            <person name="Rosenthal A."/>
            <person name="Cox E.C."/>
            <person name="Chisholm R.L."/>
            <person name="Gibbs R.A."/>
            <person name="Loomis W.F."/>
            <person name="Platzer M."/>
            <person name="Kay R.R."/>
            <person name="Williams J.G."/>
            <person name="Dear P.H."/>
            <person name="Noegel A.A."/>
            <person name="Barrell B.G."/>
            <person name="Kuspa A."/>
        </authorList>
    </citation>
    <scope>NUCLEOTIDE SEQUENCE [LARGE SCALE GENOMIC DNA]</scope>
    <source>
        <strain>AX4</strain>
    </source>
</reference>
<accession>Q54YW4</accession>
<accession>C7G002</accession>
<sequence length="337" mass="39384">MGRVKMSETFSYWIEDNIYPKKWDIIYKQRENQVFLIKINKGSSEYIIVSERFNETMSNSFEIIKIERIQNKSLWRNFDESRKRLNEKYQVSNLDFLESTLFHGTRANDPKLIFSSKVGFDIGKSSFGNYGIGLYFALNASYSNNYSFEESPTSGCKQMFLCRVLLGNSAPPTQKELKNDSTQDSIKGPGGEMFILKSNHTAYPDYLISYRQKVIVNNNTNNNNKNKNKNNNKNNNKNIKIQNENKNENKIENKNENENQFDNYGFNTNFSQNLYDKYGLKYPSQEKPKPGFFTPNKELEYEIFPLLFEKNEKEEELEELEDYQLALLLSTSSLGSK</sequence>
<protein>
    <recommendedName>
        <fullName>Probable poly [ADP-ribose] polymerase DDB_G0278045</fullName>
        <ecNumber>2.4.2.30</ecNumber>
    </recommendedName>
</protein>
<name>Y8045_DICDI</name>
<keyword id="KW-0328">Glycosyltransferase</keyword>
<keyword id="KW-0520">NAD</keyword>
<keyword id="KW-1185">Reference proteome</keyword>
<keyword id="KW-0808">Transferase</keyword>
<evidence type="ECO:0000255" key="1">
    <source>
        <dbReference type="PROSITE-ProRule" id="PRU00397"/>
    </source>
</evidence>
<evidence type="ECO:0000256" key="2">
    <source>
        <dbReference type="SAM" id="MobiDB-lite"/>
    </source>
</evidence>
<evidence type="ECO:0000305" key="3"/>
<dbReference type="EC" id="2.4.2.30"/>
<dbReference type="EMBL" id="AAFI02000023">
    <property type="protein sequence ID" value="EEU04115.1"/>
    <property type="molecule type" value="Genomic_DNA"/>
</dbReference>
<dbReference type="RefSeq" id="XP_002649167.1">
    <property type="nucleotide sequence ID" value="XM_002649121.1"/>
</dbReference>
<dbReference type="SMR" id="Q54YW4"/>
<dbReference type="PaxDb" id="44689-DDB0304590"/>
<dbReference type="EnsemblProtists" id="EEU04115">
    <property type="protein sequence ID" value="EEU04115"/>
    <property type="gene ID" value="DDB_G0278045"/>
</dbReference>
<dbReference type="GeneID" id="8621299"/>
<dbReference type="KEGG" id="ddi:DDB_G0278045"/>
<dbReference type="dictyBase" id="DDB_G0278045"/>
<dbReference type="VEuPathDB" id="AmoebaDB:DDB_G0278045"/>
<dbReference type="eggNOG" id="ENOG502S6U3">
    <property type="taxonomic scope" value="Eukaryota"/>
</dbReference>
<dbReference type="HOGENOM" id="CLU_824937_0_0_1"/>
<dbReference type="InParanoid" id="Q54YW4"/>
<dbReference type="OMA" id="EDHENDY"/>
<dbReference type="PhylomeDB" id="Q54YW4"/>
<dbReference type="PRO" id="PR:Q54YW4"/>
<dbReference type="Proteomes" id="UP000002195">
    <property type="component" value="Chromosome 3"/>
</dbReference>
<dbReference type="GO" id="GO:0003950">
    <property type="term" value="F:NAD+ poly-ADP-ribosyltransferase activity"/>
    <property type="evidence" value="ECO:0007669"/>
    <property type="project" value="UniProtKB-EC"/>
</dbReference>
<dbReference type="GO" id="GO:0140806">
    <property type="term" value="F:NAD+-protein-aspartate ADP-ribosyltransferase activity"/>
    <property type="evidence" value="ECO:0007669"/>
    <property type="project" value="RHEA"/>
</dbReference>
<dbReference type="GO" id="GO:0140807">
    <property type="term" value="F:NAD+-protein-glutamate ADP-ribosyltransferase activity"/>
    <property type="evidence" value="ECO:0007669"/>
    <property type="project" value="RHEA"/>
</dbReference>
<dbReference type="Gene3D" id="3.90.228.10">
    <property type="match status" value="1"/>
</dbReference>
<dbReference type="InterPro" id="IPR051712">
    <property type="entry name" value="ARTD-AVP"/>
</dbReference>
<dbReference type="InterPro" id="IPR012317">
    <property type="entry name" value="Poly(ADP-ribose)pol_cat_dom"/>
</dbReference>
<dbReference type="PANTHER" id="PTHR45740">
    <property type="entry name" value="POLY [ADP-RIBOSE] POLYMERASE"/>
    <property type="match status" value="1"/>
</dbReference>
<dbReference type="PANTHER" id="PTHR45740:SF2">
    <property type="entry name" value="POLY [ADP-RIBOSE] POLYMERASE"/>
    <property type="match status" value="1"/>
</dbReference>
<dbReference type="Pfam" id="PF00644">
    <property type="entry name" value="PARP"/>
    <property type="match status" value="1"/>
</dbReference>
<dbReference type="SUPFAM" id="SSF56399">
    <property type="entry name" value="ADP-ribosylation"/>
    <property type="match status" value="1"/>
</dbReference>
<dbReference type="PROSITE" id="PS51059">
    <property type="entry name" value="PARP_CATALYTIC"/>
    <property type="match status" value="1"/>
</dbReference>
<proteinExistence type="predicted"/>
<organism>
    <name type="scientific">Dictyostelium discoideum</name>
    <name type="common">Social amoeba</name>
    <dbReference type="NCBI Taxonomy" id="44689"/>
    <lineage>
        <taxon>Eukaryota</taxon>
        <taxon>Amoebozoa</taxon>
        <taxon>Evosea</taxon>
        <taxon>Eumycetozoa</taxon>
        <taxon>Dictyostelia</taxon>
        <taxon>Dictyosteliales</taxon>
        <taxon>Dictyosteliaceae</taxon>
        <taxon>Dictyostelium</taxon>
    </lineage>
</organism>
<comment type="catalytic activity">
    <reaction evidence="3">
        <text>L-aspartyl-[protein] + NAD(+) = 4-O-(ADP-D-ribosyl)-L-aspartyl-[protein] + nicotinamide</text>
        <dbReference type="Rhea" id="RHEA:54424"/>
        <dbReference type="Rhea" id="RHEA-COMP:9867"/>
        <dbReference type="Rhea" id="RHEA-COMP:13832"/>
        <dbReference type="ChEBI" id="CHEBI:17154"/>
        <dbReference type="ChEBI" id="CHEBI:29961"/>
        <dbReference type="ChEBI" id="CHEBI:57540"/>
        <dbReference type="ChEBI" id="CHEBI:138102"/>
    </reaction>
</comment>
<comment type="catalytic activity">
    <reaction evidence="3">
        <text>L-glutamyl-[protein] + NAD(+) = 5-O-(ADP-D-ribosyl)-L-glutamyl-[protein] + nicotinamide</text>
        <dbReference type="Rhea" id="RHEA:58224"/>
        <dbReference type="Rhea" id="RHEA-COMP:10208"/>
        <dbReference type="Rhea" id="RHEA-COMP:15089"/>
        <dbReference type="ChEBI" id="CHEBI:17154"/>
        <dbReference type="ChEBI" id="CHEBI:29973"/>
        <dbReference type="ChEBI" id="CHEBI:57540"/>
        <dbReference type="ChEBI" id="CHEBI:142540"/>
    </reaction>
</comment>
<comment type="catalytic activity">
    <reaction evidence="3">
        <text>NAD(+) + (ADP-D-ribosyl)n-acceptor = nicotinamide + (ADP-D-ribosyl)n+1-acceptor + H(+).</text>
        <dbReference type="EC" id="2.4.2.30"/>
    </reaction>
</comment>
<gene>
    <name type="ORF">DDB_G0278045</name>
</gene>